<protein>
    <recommendedName>
        <fullName evidence="1">Thymidine kinase</fullName>
        <ecNumber evidence="1">2.7.1.21</ecNumber>
    </recommendedName>
</protein>
<proteinExistence type="inferred from homology"/>
<comment type="catalytic activity">
    <reaction evidence="1">
        <text>thymidine + ATP = dTMP + ADP + H(+)</text>
        <dbReference type="Rhea" id="RHEA:19129"/>
        <dbReference type="ChEBI" id="CHEBI:15378"/>
        <dbReference type="ChEBI" id="CHEBI:17748"/>
        <dbReference type="ChEBI" id="CHEBI:30616"/>
        <dbReference type="ChEBI" id="CHEBI:63528"/>
        <dbReference type="ChEBI" id="CHEBI:456216"/>
        <dbReference type="EC" id="2.7.1.21"/>
    </reaction>
</comment>
<comment type="subunit">
    <text evidence="1">Homotetramer.</text>
</comment>
<comment type="subcellular location">
    <subcellularLocation>
        <location evidence="1">Cytoplasm</location>
    </subcellularLocation>
</comment>
<comment type="similarity">
    <text evidence="1">Belongs to the thymidine kinase family.</text>
</comment>
<comment type="sequence caution" evidence="2">
    <conflict type="erroneous initiation">
        <sequence resource="EMBL-CDS" id="ABD56241"/>
    </conflict>
</comment>
<reference key="1">
    <citation type="submission" date="2006-02" db="EMBL/GenBank/DDBJ databases">
        <title>Complete sequence of chromosome of Jannaschia sp. CCS1.</title>
        <authorList>
            <consortium name="US DOE Joint Genome Institute"/>
            <person name="Copeland A."/>
            <person name="Lucas S."/>
            <person name="Lapidus A."/>
            <person name="Barry K."/>
            <person name="Detter J.C."/>
            <person name="Glavina del Rio T."/>
            <person name="Hammon N."/>
            <person name="Israni S."/>
            <person name="Pitluck S."/>
            <person name="Brettin T."/>
            <person name="Bruce D."/>
            <person name="Han C."/>
            <person name="Tapia R."/>
            <person name="Gilna P."/>
            <person name="Chertkov O."/>
            <person name="Saunders E."/>
            <person name="Schmutz J."/>
            <person name="Larimer F."/>
            <person name="Land M."/>
            <person name="Kyrpides N."/>
            <person name="Lykidis A."/>
            <person name="Moran M.A."/>
            <person name="Belas R."/>
            <person name="Ye W."/>
            <person name="Buchan A."/>
            <person name="Gonzalez J.M."/>
            <person name="Schell M.A."/>
            <person name="Richardson P."/>
        </authorList>
    </citation>
    <scope>NUCLEOTIDE SEQUENCE [LARGE SCALE GENOMIC DNA]</scope>
    <source>
        <strain>CCS1</strain>
    </source>
</reference>
<name>KITH_JANSC</name>
<keyword id="KW-0067">ATP-binding</keyword>
<keyword id="KW-0963">Cytoplasm</keyword>
<keyword id="KW-0237">DNA synthesis</keyword>
<keyword id="KW-0418">Kinase</keyword>
<keyword id="KW-0479">Metal-binding</keyword>
<keyword id="KW-0547">Nucleotide-binding</keyword>
<keyword id="KW-1185">Reference proteome</keyword>
<keyword id="KW-0808">Transferase</keyword>
<keyword id="KW-0862">Zinc</keyword>
<evidence type="ECO:0000255" key="1">
    <source>
        <dbReference type="HAMAP-Rule" id="MF_00124"/>
    </source>
</evidence>
<evidence type="ECO:0000305" key="2"/>
<accession>Q28M21</accession>
<gene>
    <name evidence="1" type="primary">tdk</name>
    <name type="ordered locus">Jann_3324</name>
</gene>
<sequence length="195" mass="21531">MAKLYFNYSTMNAGKSTLLLQASYNYIERGMQTYLLTANFDDRAGMGRIGSRIGIEAEADTYTQSDDLFAKIDARLKAGPCACVLVDEAQWMTRDQVWQLARAVDDLGVPVMCYGLRVDFRGELFPGSAALLALADEMREVRTICHCGRKATMVIRVGEDGNALAEGAQIEVGGNDRYISLCRKHFREAVGDVPV</sequence>
<feature type="chain" id="PRO_0000242793" description="Thymidine kinase">
    <location>
        <begin position="1"/>
        <end position="195"/>
    </location>
</feature>
<feature type="active site" description="Proton acceptor" evidence="1">
    <location>
        <position position="88"/>
    </location>
</feature>
<feature type="binding site" evidence="1">
    <location>
        <begin position="9"/>
        <end position="16"/>
    </location>
    <ligand>
        <name>ATP</name>
        <dbReference type="ChEBI" id="CHEBI:30616"/>
    </ligand>
</feature>
<feature type="binding site" evidence="1">
    <location>
        <begin position="87"/>
        <end position="90"/>
    </location>
    <ligand>
        <name>ATP</name>
        <dbReference type="ChEBI" id="CHEBI:30616"/>
    </ligand>
</feature>
<feature type="binding site" evidence="1">
    <location>
        <position position="145"/>
    </location>
    <ligand>
        <name>Zn(2+)</name>
        <dbReference type="ChEBI" id="CHEBI:29105"/>
    </ligand>
</feature>
<feature type="binding site" evidence="1">
    <location>
        <position position="147"/>
    </location>
    <ligand>
        <name>Zn(2+)</name>
        <dbReference type="ChEBI" id="CHEBI:29105"/>
    </ligand>
</feature>
<feature type="binding site" evidence="1">
    <location>
        <position position="182"/>
    </location>
    <ligand>
        <name>Zn(2+)</name>
        <dbReference type="ChEBI" id="CHEBI:29105"/>
    </ligand>
</feature>
<feature type="binding site" evidence="1">
    <location>
        <position position="185"/>
    </location>
    <ligand>
        <name>Zn(2+)</name>
        <dbReference type="ChEBI" id="CHEBI:29105"/>
    </ligand>
</feature>
<organism>
    <name type="scientific">Jannaschia sp. (strain CCS1)</name>
    <dbReference type="NCBI Taxonomy" id="290400"/>
    <lineage>
        <taxon>Bacteria</taxon>
        <taxon>Pseudomonadati</taxon>
        <taxon>Pseudomonadota</taxon>
        <taxon>Alphaproteobacteria</taxon>
        <taxon>Rhodobacterales</taxon>
        <taxon>Roseobacteraceae</taxon>
        <taxon>Jannaschia</taxon>
    </lineage>
</organism>
<dbReference type="EC" id="2.7.1.21" evidence="1"/>
<dbReference type="EMBL" id="CP000264">
    <property type="protein sequence ID" value="ABD56241.1"/>
    <property type="status" value="ALT_INIT"/>
    <property type="molecule type" value="Genomic_DNA"/>
</dbReference>
<dbReference type="RefSeq" id="WP_044006964.1">
    <property type="nucleotide sequence ID" value="NC_007802.1"/>
</dbReference>
<dbReference type="SMR" id="Q28M21"/>
<dbReference type="STRING" id="290400.Jann_3324"/>
<dbReference type="KEGG" id="jan:Jann_3324"/>
<dbReference type="eggNOG" id="COG1435">
    <property type="taxonomic scope" value="Bacteria"/>
</dbReference>
<dbReference type="HOGENOM" id="CLU_064400_2_1_5"/>
<dbReference type="OrthoDB" id="9781579at2"/>
<dbReference type="Proteomes" id="UP000008326">
    <property type="component" value="Chromosome"/>
</dbReference>
<dbReference type="GO" id="GO:0005829">
    <property type="term" value="C:cytosol"/>
    <property type="evidence" value="ECO:0007669"/>
    <property type="project" value="TreeGrafter"/>
</dbReference>
<dbReference type="GO" id="GO:0005524">
    <property type="term" value="F:ATP binding"/>
    <property type="evidence" value="ECO:0007669"/>
    <property type="project" value="UniProtKB-UniRule"/>
</dbReference>
<dbReference type="GO" id="GO:0004797">
    <property type="term" value="F:thymidine kinase activity"/>
    <property type="evidence" value="ECO:0007669"/>
    <property type="project" value="UniProtKB-UniRule"/>
</dbReference>
<dbReference type="GO" id="GO:0008270">
    <property type="term" value="F:zinc ion binding"/>
    <property type="evidence" value="ECO:0007669"/>
    <property type="project" value="UniProtKB-UniRule"/>
</dbReference>
<dbReference type="GO" id="GO:0071897">
    <property type="term" value="P:DNA biosynthetic process"/>
    <property type="evidence" value="ECO:0007669"/>
    <property type="project" value="UniProtKB-KW"/>
</dbReference>
<dbReference type="GO" id="GO:0046104">
    <property type="term" value="P:thymidine metabolic process"/>
    <property type="evidence" value="ECO:0007669"/>
    <property type="project" value="TreeGrafter"/>
</dbReference>
<dbReference type="Gene3D" id="3.30.60.20">
    <property type="match status" value="1"/>
</dbReference>
<dbReference type="Gene3D" id="3.40.50.300">
    <property type="entry name" value="P-loop containing nucleotide triphosphate hydrolases"/>
    <property type="match status" value="1"/>
</dbReference>
<dbReference type="HAMAP" id="MF_00124">
    <property type="entry name" value="Thymidine_kinase"/>
    <property type="match status" value="1"/>
</dbReference>
<dbReference type="InterPro" id="IPR027417">
    <property type="entry name" value="P-loop_NTPase"/>
</dbReference>
<dbReference type="InterPro" id="IPR001267">
    <property type="entry name" value="Thymidine_kinase"/>
</dbReference>
<dbReference type="InterPro" id="IPR020633">
    <property type="entry name" value="Thymidine_kinase_CS"/>
</dbReference>
<dbReference type="NCBIfam" id="NF003300">
    <property type="entry name" value="PRK04296.1-5"/>
    <property type="match status" value="1"/>
</dbReference>
<dbReference type="PANTHER" id="PTHR11441">
    <property type="entry name" value="THYMIDINE KINASE"/>
    <property type="match status" value="1"/>
</dbReference>
<dbReference type="PANTHER" id="PTHR11441:SF0">
    <property type="entry name" value="THYMIDINE KINASE, CYTOSOLIC"/>
    <property type="match status" value="1"/>
</dbReference>
<dbReference type="Pfam" id="PF00265">
    <property type="entry name" value="TK"/>
    <property type="match status" value="1"/>
</dbReference>
<dbReference type="PIRSF" id="PIRSF035805">
    <property type="entry name" value="TK_cell"/>
    <property type="match status" value="1"/>
</dbReference>
<dbReference type="SUPFAM" id="SSF57716">
    <property type="entry name" value="Glucocorticoid receptor-like (DNA-binding domain)"/>
    <property type="match status" value="1"/>
</dbReference>
<dbReference type="SUPFAM" id="SSF52540">
    <property type="entry name" value="P-loop containing nucleoside triphosphate hydrolases"/>
    <property type="match status" value="1"/>
</dbReference>
<dbReference type="PROSITE" id="PS00603">
    <property type="entry name" value="TK_CELLULAR_TYPE"/>
    <property type="match status" value="1"/>
</dbReference>